<feature type="chain" id="PRO_1000132989" description="Enolase">
    <location>
        <begin position="1"/>
        <end position="434"/>
    </location>
</feature>
<feature type="active site" description="Proton donor" evidence="1">
    <location>
        <position position="209"/>
    </location>
</feature>
<feature type="active site" description="Proton acceptor" evidence="1">
    <location>
        <position position="343"/>
    </location>
</feature>
<feature type="binding site" evidence="1">
    <location>
        <position position="167"/>
    </location>
    <ligand>
        <name>(2R)-2-phosphoglycerate</name>
        <dbReference type="ChEBI" id="CHEBI:58289"/>
    </ligand>
</feature>
<feature type="binding site" evidence="1">
    <location>
        <position position="246"/>
    </location>
    <ligand>
        <name>Mg(2+)</name>
        <dbReference type="ChEBI" id="CHEBI:18420"/>
    </ligand>
</feature>
<feature type="binding site" evidence="1">
    <location>
        <position position="291"/>
    </location>
    <ligand>
        <name>Mg(2+)</name>
        <dbReference type="ChEBI" id="CHEBI:18420"/>
    </ligand>
</feature>
<feature type="binding site" evidence="1">
    <location>
        <position position="318"/>
    </location>
    <ligand>
        <name>Mg(2+)</name>
        <dbReference type="ChEBI" id="CHEBI:18420"/>
    </ligand>
</feature>
<feature type="binding site" evidence="1">
    <location>
        <position position="343"/>
    </location>
    <ligand>
        <name>(2R)-2-phosphoglycerate</name>
        <dbReference type="ChEBI" id="CHEBI:58289"/>
    </ligand>
</feature>
<feature type="binding site" evidence="1">
    <location>
        <position position="372"/>
    </location>
    <ligand>
        <name>(2R)-2-phosphoglycerate</name>
        <dbReference type="ChEBI" id="CHEBI:58289"/>
    </ligand>
</feature>
<feature type="binding site" evidence="1">
    <location>
        <position position="373"/>
    </location>
    <ligand>
        <name>(2R)-2-phosphoglycerate</name>
        <dbReference type="ChEBI" id="CHEBI:58289"/>
    </ligand>
</feature>
<feature type="binding site" evidence="1">
    <location>
        <position position="394"/>
    </location>
    <ligand>
        <name>(2R)-2-phosphoglycerate</name>
        <dbReference type="ChEBI" id="CHEBI:58289"/>
    </ligand>
</feature>
<dbReference type="EC" id="4.2.1.11" evidence="1"/>
<dbReference type="EMBL" id="CP001161">
    <property type="protein sequence ID" value="ACL30766.1"/>
    <property type="molecule type" value="Genomic_DNA"/>
</dbReference>
<dbReference type="RefSeq" id="WP_009874370.1">
    <property type="nucleotide sequence ID" value="NC_011833.1"/>
</dbReference>
<dbReference type="SMR" id="B8D9J5"/>
<dbReference type="KEGG" id="bap:BUAP5A_410"/>
<dbReference type="HOGENOM" id="CLU_031223_2_1_6"/>
<dbReference type="OrthoDB" id="9804716at2"/>
<dbReference type="UniPathway" id="UPA00109">
    <property type="reaction ID" value="UER00187"/>
</dbReference>
<dbReference type="Proteomes" id="UP000006904">
    <property type="component" value="Chromosome"/>
</dbReference>
<dbReference type="GO" id="GO:0009986">
    <property type="term" value="C:cell surface"/>
    <property type="evidence" value="ECO:0007669"/>
    <property type="project" value="UniProtKB-SubCell"/>
</dbReference>
<dbReference type="GO" id="GO:0005576">
    <property type="term" value="C:extracellular region"/>
    <property type="evidence" value="ECO:0007669"/>
    <property type="project" value="UniProtKB-SubCell"/>
</dbReference>
<dbReference type="GO" id="GO:0000015">
    <property type="term" value="C:phosphopyruvate hydratase complex"/>
    <property type="evidence" value="ECO:0007669"/>
    <property type="project" value="InterPro"/>
</dbReference>
<dbReference type="GO" id="GO:0000287">
    <property type="term" value="F:magnesium ion binding"/>
    <property type="evidence" value="ECO:0007669"/>
    <property type="project" value="UniProtKB-UniRule"/>
</dbReference>
<dbReference type="GO" id="GO:0004634">
    <property type="term" value="F:phosphopyruvate hydratase activity"/>
    <property type="evidence" value="ECO:0007669"/>
    <property type="project" value="UniProtKB-UniRule"/>
</dbReference>
<dbReference type="GO" id="GO:0006096">
    <property type="term" value="P:glycolytic process"/>
    <property type="evidence" value="ECO:0007669"/>
    <property type="project" value="UniProtKB-UniRule"/>
</dbReference>
<dbReference type="CDD" id="cd03313">
    <property type="entry name" value="enolase"/>
    <property type="match status" value="1"/>
</dbReference>
<dbReference type="FunFam" id="3.20.20.120:FF:000001">
    <property type="entry name" value="Enolase"/>
    <property type="match status" value="1"/>
</dbReference>
<dbReference type="FunFam" id="3.30.390.10:FF:000001">
    <property type="entry name" value="Enolase"/>
    <property type="match status" value="1"/>
</dbReference>
<dbReference type="Gene3D" id="3.20.20.120">
    <property type="entry name" value="Enolase-like C-terminal domain"/>
    <property type="match status" value="1"/>
</dbReference>
<dbReference type="Gene3D" id="3.30.390.10">
    <property type="entry name" value="Enolase-like, N-terminal domain"/>
    <property type="match status" value="1"/>
</dbReference>
<dbReference type="HAMAP" id="MF_00318">
    <property type="entry name" value="Enolase"/>
    <property type="match status" value="1"/>
</dbReference>
<dbReference type="InterPro" id="IPR000941">
    <property type="entry name" value="Enolase"/>
</dbReference>
<dbReference type="InterPro" id="IPR036849">
    <property type="entry name" value="Enolase-like_C_sf"/>
</dbReference>
<dbReference type="InterPro" id="IPR029017">
    <property type="entry name" value="Enolase-like_N"/>
</dbReference>
<dbReference type="InterPro" id="IPR020810">
    <property type="entry name" value="Enolase_C"/>
</dbReference>
<dbReference type="InterPro" id="IPR020809">
    <property type="entry name" value="Enolase_CS"/>
</dbReference>
<dbReference type="InterPro" id="IPR020811">
    <property type="entry name" value="Enolase_N"/>
</dbReference>
<dbReference type="NCBIfam" id="TIGR01060">
    <property type="entry name" value="eno"/>
    <property type="match status" value="1"/>
</dbReference>
<dbReference type="PANTHER" id="PTHR11902">
    <property type="entry name" value="ENOLASE"/>
    <property type="match status" value="1"/>
</dbReference>
<dbReference type="PANTHER" id="PTHR11902:SF1">
    <property type="entry name" value="ENOLASE"/>
    <property type="match status" value="1"/>
</dbReference>
<dbReference type="Pfam" id="PF00113">
    <property type="entry name" value="Enolase_C"/>
    <property type="match status" value="1"/>
</dbReference>
<dbReference type="Pfam" id="PF03952">
    <property type="entry name" value="Enolase_N"/>
    <property type="match status" value="1"/>
</dbReference>
<dbReference type="PIRSF" id="PIRSF001400">
    <property type="entry name" value="Enolase"/>
    <property type="match status" value="1"/>
</dbReference>
<dbReference type="PRINTS" id="PR00148">
    <property type="entry name" value="ENOLASE"/>
</dbReference>
<dbReference type="SFLD" id="SFLDS00001">
    <property type="entry name" value="Enolase"/>
    <property type="match status" value="1"/>
</dbReference>
<dbReference type="SFLD" id="SFLDF00002">
    <property type="entry name" value="enolase"/>
    <property type="match status" value="1"/>
</dbReference>
<dbReference type="SMART" id="SM01192">
    <property type="entry name" value="Enolase_C"/>
    <property type="match status" value="1"/>
</dbReference>
<dbReference type="SMART" id="SM01193">
    <property type="entry name" value="Enolase_N"/>
    <property type="match status" value="1"/>
</dbReference>
<dbReference type="SUPFAM" id="SSF51604">
    <property type="entry name" value="Enolase C-terminal domain-like"/>
    <property type="match status" value="1"/>
</dbReference>
<dbReference type="SUPFAM" id="SSF54826">
    <property type="entry name" value="Enolase N-terminal domain-like"/>
    <property type="match status" value="1"/>
</dbReference>
<dbReference type="PROSITE" id="PS00164">
    <property type="entry name" value="ENOLASE"/>
    <property type="match status" value="1"/>
</dbReference>
<gene>
    <name evidence="1" type="primary">eno</name>
    <name type="ordered locus">BUAP5A_410</name>
</gene>
<proteinExistence type="inferred from homology"/>
<reference key="1">
    <citation type="journal article" date="2009" name="Science">
        <title>The dynamics and time scale of ongoing genomic erosion in symbiotic bacteria.</title>
        <authorList>
            <person name="Moran N.A."/>
            <person name="McLaughlin H.J."/>
            <person name="Sorek R."/>
        </authorList>
    </citation>
    <scope>NUCLEOTIDE SEQUENCE [LARGE SCALE GENOMIC DNA]</scope>
    <source>
        <strain>5A</strain>
    </source>
</reference>
<comment type="function">
    <text evidence="1">Catalyzes the reversible conversion of 2-phosphoglycerate (2-PG) into phosphoenolpyruvate (PEP). It is essential for the degradation of carbohydrates via glycolysis.</text>
</comment>
<comment type="catalytic activity">
    <reaction evidence="1">
        <text>(2R)-2-phosphoglycerate = phosphoenolpyruvate + H2O</text>
        <dbReference type="Rhea" id="RHEA:10164"/>
        <dbReference type="ChEBI" id="CHEBI:15377"/>
        <dbReference type="ChEBI" id="CHEBI:58289"/>
        <dbReference type="ChEBI" id="CHEBI:58702"/>
        <dbReference type="EC" id="4.2.1.11"/>
    </reaction>
</comment>
<comment type="cofactor">
    <cofactor evidence="1">
        <name>Mg(2+)</name>
        <dbReference type="ChEBI" id="CHEBI:18420"/>
    </cofactor>
    <text evidence="1">Binds a second Mg(2+) ion via substrate during catalysis.</text>
</comment>
<comment type="pathway">
    <text evidence="1">Carbohydrate degradation; glycolysis; pyruvate from D-glyceraldehyde 3-phosphate: step 4/5.</text>
</comment>
<comment type="subunit">
    <text evidence="1">Component of the RNA degradosome, a multiprotein complex involved in RNA processing and mRNA degradation.</text>
</comment>
<comment type="subcellular location">
    <subcellularLocation>
        <location evidence="1">Cytoplasm</location>
    </subcellularLocation>
    <subcellularLocation>
        <location evidence="1">Secreted</location>
    </subcellularLocation>
    <subcellularLocation>
        <location evidence="1">Cell surface</location>
    </subcellularLocation>
    <text evidence="1">Fractions of enolase are present in both the cytoplasm and on the cell surface.</text>
</comment>
<comment type="similarity">
    <text evidence="1">Belongs to the enolase family.</text>
</comment>
<keyword id="KW-0963">Cytoplasm</keyword>
<keyword id="KW-0324">Glycolysis</keyword>
<keyword id="KW-0456">Lyase</keyword>
<keyword id="KW-0460">Magnesium</keyword>
<keyword id="KW-0479">Metal-binding</keyword>
<keyword id="KW-0964">Secreted</keyword>
<evidence type="ECO:0000255" key="1">
    <source>
        <dbReference type="HAMAP-Rule" id="MF_00318"/>
    </source>
</evidence>
<accession>B8D9J5</accession>
<organism>
    <name type="scientific">Buchnera aphidicola subsp. Acyrthosiphon pisum (strain 5A)</name>
    <dbReference type="NCBI Taxonomy" id="563178"/>
    <lineage>
        <taxon>Bacteria</taxon>
        <taxon>Pseudomonadati</taxon>
        <taxon>Pseudomonadota</taxon>
        <taxon>Gammaproteobacteria</taxon>
        <taxon>Enterobacterales</taxon>
        <taxon>Erwiniaceae</taxon>
        <taxon>Buchnera</taxon>
    </lineage>
</organism>
<name>ENO_BUCA5</name>
<sequence>MSKITKIIAREIIDSRGNPTVESEVHLEGGFVGLASSPSGASTGSLEALELRDENKDRFMGKGVEKAVSLINEKISIALKNKNARNQSDIDHIMIDLDGTINKSKLGANAILSVSLAVAKAAAASKRMPLYAHIAEINETPGVFSMPLPMINIINGGKHANNNIDIQEFMIQPISAKTVKESIRIGCEIFHALGELLKEKGMSTTVGDEGGYAPNLKSNEEALNIIQDAIQKTKYKLGQDIRLAIDCAASELYNKNEKKYNLKGENISFSSKEFTHYLEKLSQKYPIVSIEDGQDESDWEGFLYQTHVLGHKIQLVGDDLFVTNKNILKKGIKKGIANSILIKLNQIGTLTETLEAIKTAKQANYGVIISHRSGETEDASIADLSVGTSSGQIKTGSMSRSDRTSKYNQLIRIEENLGTKYAPFHGLREIKSAF</sequence>
<protein>
    <recommendedName>
        <fullName evidence="1">Enolase</fullName>
        <ecNumber evidence="1">4.2.1.11</ecNumber>
    </recommendedName>
    <alternativeName>
        <fullName evidence="1">2-phospho-D-glycerate hydro-lyase</fullName>
    </alternativeName>
    <alternativeName>
        <fullName evidence="1">2-phosphoglycerate dehydratase</fullName>
    </alternativeName>
</protein>